<protein>
    <recommendedName>
        <fullName evidence="1">Bifunctional uridylyltransferase/uridylyl-removing enzyme</fullName>
        <shortName evidence="1">UTase/UR</shortName>
    </recommendedName>
    <alternativeName>
        <fullName evidence="1">Bifunctional [protein-PII] modification enzyme</fullName>
    </alternativeName>
    <alternativeName>
        <fullName evidence="1">Bifunctional nitrogen sensor protein</fullName>
    </alternativeName>
    <domain>
        <recommendedName>
            <fullName evidence="1">[Protein-PII] uridylyltransferase</fullName>
            <shortName evidence="1">PII uridylyltransferase</shortName>
            <shortName evidence="1">UTase</shortName>
            <ecNumber evidence="1">2.7.7.59</ecNumber>
        </recommendedName>
    </domain>
    <domain>
        <recommendedName>
            <fullName evidence="1">[Protein-PII]-UMP uridylyl-removing enzyme</fullName>
            <shortName evidence="1">UR</shortName>
            <ecNumber evidence="1">3.1.4.-</ecNumber>
        </recommendedName>
    </domain>
</protein>
<feature type="chain" id="PRO_1000022331" description="Bifunctional uridylyltransferase/uridylyl-removing enzyme">
    <location>
        <begin position="1"/>
        <end position="858"/>
    </location>
</feature>
<feature type="domain" description="HD" evidence="2">
    <location>
        <begin position="443"/>
        <end position="565"/>
    </location>
</feature>
<feature type="domain" description="ACT 1" evidence="1">
    <location>
        <begin position="682"/>
        <end position="761"/>
    </location>
</feature>
<feature type="domain" description="ACT 2" evidence="1">
    <location>
        <begin position="790"/>
        <end position="858"/>
    </location>
</feature>
<feature type="region of interest" description="Uridylyltransferase">
    <location>
        <begin position="1"/>
        <end position="324"/>
    </location>
</feature>
<feature type="region of interest" description="Uridylyl-removing">
    <location>
        <begin position="325"/>
        <end position="681"/>
    </location>
</feature>
<keyword id="KW-0378">Hydrolase</keyword>
<keyword id="KW-0460">Magnesium</keyword>
<keyword id="KW-0511">Multifunctional enzyme</keyword>
<keyword id="KW-0548">Nucleotidyltransferase</keyword>
<keyword id="KW-0677">Repeat</keyword>
<keyword id="KW-0808">Transferase</keyword>
<organism>
    <name type="scientific">Burkholderia mallei (strain NCTC 10247)</name>
    <dbReference type="NCBI Taxonomy" id="320389"/>
    <lineage>
        <taxon>Bacteria</taxon>
        <taxon>Pseudomonadati</taxon>
        <taxon>Pseudomonadota</taxon>
        <taxon>Betaproteobacteria</taxon>
        <taxon>Burkholderiales</taxon>
        <taxon>Burkholderiaceae</taxon>
        <taxon>Burkholderia</taxon>
        <taxon>pseudomallei group</taxon>
    </lineage>
</organism>
<gene>
    <name evidence="1" type="primary">glnD</name>
    <name type="ordered locus">BMA10247_1331</name>
</gene>
<sequence>MSASVAEPPPALSRKAEFKAAKAELLARFKSANHVTPLMHALSRATDDALRSLWQECGLPATLALVAVGGFGRGELSPHSDVDILVLLPDAHASELDERIERFIGMAWDLGLEIGSSVRTVDQCIEEASHDVTVQTSLLEARRIVGSTALFERFMLRYREALDARAFFQAKVLEMRQRHAKFQDTPYSLEPNVKESPGGLRDLQTILWIARAAGFGSSWRELDTRGLITDREARELRRNEGFLKTLRARLHVIAGRRQDILVFDLQTQAAESFGYQPTSAKRASEQLMRRYYWAAKAVTQLATILIQNIEAQLFPATSGVTRVLSPGRFVEKQGMLEIAADDVFERHPDAILEAFLLYEATRGVKGLSARTLRALYNSRDVMNNAWRRDPRNRHTFMQILQQPEGITHAFRLMNQTSVLGRYLLNFRRIVGQMQHDLYHVYTVDQHILMVLRNIRRFAVAEHAHEYPFCSQLIVNFERPWVLYVAALFHDIAKGRGGDHSALGMADARRFCREHGIEGDDAALVVWLVQHHLTMSQVAQKQDTSDPVVIKRFAELVGSERRLTALYLLTVADIRGTSPKVWNTWKGKLLEDLYRATLAVLGGAQPDAHSELKTRQEEALALLRLETVPPDAHRALWDQLDVGYFLRHDAADIAWQTRVLYRHVAADTAIVRARPSPVGDALQVLVYVKDRSDLFAGICAYFDRNGLSVLDARVNTTRHGYALDNFIVTQTEHDVQYRDIANLVEQQLAARLAESAPLPEPSKGRLSRLSRTFPITPRVDLRADERGQYYILSVSANDRPGLLYSIARVLAEHRVGVHAARINTLGERVEDVFMLDGTGLSDNRLQIQVETELLRAIAV</sequence>
<accession>A3MKU6</accession>
<reference key="1">
    <citation type="journal article" date="2010" name="Genome Biol. Evol.">
        <title>Continuing evolution of Burkholderia mallei through genome reduction and large-scale rearrangements.</title>
        <authorList>
            <person name="Losada L."/>
            <person name="Ronning C.M."/>
            <person name="DeShazer D."/>
            <person name="Woods D."/>
            <person name="Fedorova N."/>
            <person name="Kim H.S."/>
            <person name="Shabalina S.A."/>
            <person name="Pearson T.R."/>
            <person name="Brinkac L."/>
            <person name="Tan P."/>
            <person name="Nandi T."/>
            <person name="Crabtree J."/>
            <person name="Badger J."/>
            <person name="Beckstrom-Sternberg S."/>
            <person name="Saqib M."/>
            <person name="Schutzer S.E."/>
            <person name="Keim P."/>
            <person name="Nierman W.C."/>
        </authorList>
    </citation>
    <scope>NUCLEOTIDE SEQUENCE [LARGE SCALE GENOMIC DNA]</scope>
    <source>
        <strain>NCTC 10247</strain>
    </source>
</reference>
<name>GLND_BURM7</name>
<evidence type="ECO:0000255" key="1">
    <source>
        <dbReference type="HAMAP-Rule" id="MF_00277"/>
    </source>
</evidence>
<evidence type="ECO:0000255" key="2">
    <source>
        <dbReference type="PROSITE-ProRule" id="PRU01175"/>
    </source>
</evidence>
<comment type="function">
    <text evidence="1">Modifies, by uridylylation and deuridylylation, the PII regulatory proteins (GlnB and homologs), in response to the nitrogen status of the cell that GlnD senses through the glutamine level. Under low glutamine levels, catalyzes the conversion of the PII proteins and UTP to PII-UMP and PPi, while under higher glutamine levels, GlnD hydrolyzes PII-UMP to PII and UMP (deuridylylation). Thus, controls uridylylation state and activity of the PII proteins, and plays an important role in the regulation of nitrogen assimilation and metabolism.</text>
</comment>
<comment type="catalytic activity">
    <reaction evidence="1">
        <text>[protein-PII]-L-tyrosine + UTP = [protein-PII]-uridylyl-L-tyrosine + diphosphate</text>
        <dbReference type="Rhea" id="RHEA:13673"/>
        <dbReference type="Rhea" id="RHEA-COMP:12147"/>
        <dbReference type="Rhea" id="RHEA-COMP:12148"/>
        <dbReference type="ChEBI" id="CHEBI:33019"/>
        <dbReference type="ChEBI" id="CHEBI:46398"/>
        <dbReference type="ChEBI" id="CHEBI:46858"/>
        <dbReference type="ChEBI" id="CHEBI:90602"/>
        <dbReference type="EC" id="2.7.7.59"/>
    </reaction>
</comment>
<comment type="catalytic activity">
    <reaction evidence="1">
        <text>[protein-PII]-uridylyl-L-tyrosine + H2O = [protein-PII]-L-tyrosine + UMP + H(+)</text>
        <dbReference type="Rhea" id="RHEA:48600"/>
        <dbReference type="Rhea" id="RHEA-COMP:12147"/>
        <dbReference type="Rhea" id="RHEA-COMP:12148"/>
        <dbReference type="ChEBI" id="CHEBI:15377"/>
        <dbReference type="ChEBI" id="CHEBI:15378"/>
        <dbReference type="ChEBI" id="CHEBI:46858"/>
        <dbReference type="ChEBI" id="CHEBI:57865"/>
        <dbReference type="ChEBI" id="CHEBI:90602"/>
    </reaction>
</comment>
<comment type="cofactor">
    <cofactor evidence="1">
        <name>Mg(2+)</name>
        <dbReference type="ChEBI" id="CHEBI:18420"/>
    </cofactor>
</comment>
<comment type="activity regulation">
    <text evidence="1">Uridylyltransferase (UTase) activity is inhibited by glutamine, while glutamine activates uridylyl-removing (UR) activity.</text>
</comment>
<comment type="domain">
    <text evidence="1">Has four distinct domains: an N-terminal nucleotidyltransferase (NT) domain responsible for UTase activity, a central HD domain that encodes UR activity, and two C-terminal ACT domains that seem to have a role in glutamine sensing.</text>
</comment>
<comment type="similarity">
    <text evidence="1">Belongs to the GlnD family.</text>
</comment>
<proteinExistence type="inferred from homology"/>
<dbReference type="EC" id="2.7.7.59" evidence="1"/>
<dbReference type="EC" id="3.1.4.-" evidence="1"/>
<dbReference type="EMBL" id="CP000548">
    <property type="protein sequence ID" value="ABO05432.1"/>
    <property type="molecule type" value="Genomic_DNA"/>
</dbReference>
<dbReference type="RefSeq" id="WP_004193976.1">
    <property type="nucleotide sequence ID" value="NZ_CP007802.1"/>
</dbReference>
<dbReference type="SMR" id="A3MKU6"/>
<dbReference type="KEGG" id="bmaz:BM44_1796"/>
<dbReference type="KEGG" id="bmn:BMA10247_1331"/>
<dbReference type="PATRIC" id="fig|320389.8.peg.2009"/>
<dbReference type="GO" id="GO:0008773">
    <property type="term" value="F:[protein-PII] uridylyltransferase activity"/>
    <property type="evidence" value="ECO:0007669"/>
    <property type="project" value="UniProtKB-UniRule"/>
</dbReference>
<dbReference type="GO" id="GO:0008081">
    <property type="term" value="F:phosphoric diester hydrolase activity"/>
    <property type="evidence" value="ECO:0007669"/>
    <property type="project" value="UniProtKB-UniRule"/>
</dbReference>
<dbReference type="GO" id="GO:0006808">
    <property type="term" value="P:regulation of nitrogen utilization"/>
    <property type="evidence" value="ECO:0007669"/>
    <property type="project" value="UniProtKB-UniRule"/>
</dbReference>
<dbReference type="CDD" id="cd04899">
    <property type="entry name" value="ACT_ACR-UUR-like_2"/>
    <property type="match status" value="1"/>
</dbReference>
<dbReference type="CDD" id="cd04900">
    <property type="entry name" value="ACT_UUR-like_1"/>
    <property type="match status" value="1"/>
</dbReference>
<dbReference type="CDD" id="cd00077">
    <property type="entry name" value="HDc"/>
    <property type="match status" value="1"/>
</dbReference>
<dbReference type="CDD" id="cd05401">
    <property type="entry name" value="NT_GlnE_GlnD_like"/>
    <property type="match status" value="1"/>
</dbReference>
<dbReference type="Gene3D" id="3.30.70.260">
    <property type="match status" value="1"/>
</dbReference>
<dbReference type="Gene3D" id="3.30.460.10">
    <property type="entry name" value="Beta Polymerase, domain 2"/>
    <property type="match status" value="1"/>
</dbReference>
<dbReference type="Gene3D" id="1.10.3210.10">
    <property type="entry name" value="Hypothetical protein af1432"/>
    <property type="match status" value="1"/>
</dbReference>
<dbReference type="Gene3D" id="1.20.120.330">
    <property type="entry name" value="Nucleotidyltransferases domain 2"/>
    <property type="match status" value="1"/>
</dbReference>
<dbReference type="HAMAP" id="MF_00277">
    <property type="entry name" value="PII_uridylyl_transf"/>
    <property type="match status" value="1"/>
</dbReference>
<dbReference type="InterPro" id="IPR045865">
    <property type="entry name" value="ACT-like_dom_sf"/>
</dbReference>
<dbReference type="InterPro" id="IPR002912">
    <property type="entry name" value="ACT_dom"/>
</dbReference>
<dbReference type="InterPro" id="IPR003607">
    <property type="entry name" value="HD/PDEase_dom"/>
</dbReference>
<dbReference type="InterPro" id="IPR006674">
    <property type="entry name" value="HD_domain"/>
</dbReference>
<dbReference type="InterPro" id="IPR043519">
    <property type="entry name" value="NT_sf"/>
</dbReference>
<dbReference type="InterPro" id="IPR013546">
    <property type="entry name" value="PII_UdlTrfase/GS_AdlTrfase"/>
</dbReference>
<dbReference type="InterPro" id="IPR002934">
    <property type="entry name" value="Polymerase_NTP_transf_dom"/>
</dbReference>
<dbReference type="InterPro" id="IPR010043">
    <property type="entry name" value="UTase/UR"/>
</dbReference>
<dbReference type="NCBIfam" id="NF002837">
    <property type="entry name" value="PRK03059.1"/>
    <property type="match status" value="1"/>
</dbReference>
<dbReference type="NCBIfam" id="TIGR01693">
    <property type="entry name" value="UTase_glnD"/>
    <property type="match status" value="1"/>
</dbReference>
<dbReference type="PANTHER" id="PTHR47320">
    <property type="entry name" value="BIFUNCTIONAL URIDYLYLTRANSFERASE/URIDYLYL-REMOVING ENZYME"/>
    <property type="match status" value="1"/>
</dbReference>
<dbReference type="PANTHER" id="PTHR47320:SF1">
    <property type="entry name" value="BIFUNCTIONAL URIDYLYLTRANSFERASE_URIDYLYL-REMOVING ENZYME"/>
    <property type="match status" value="1"/>
</dbReference>
<dbReference type="Pfam" id="PF08335">
    <property type="entry name" value="GlnD_UR_UTase"/>
    <property type="match status" value="1"/>
</dbReference>
<dbReference type="Pfam" id="PF01966">
    <property type="entry name" value="HD"/>
    <property type="match status" value="1"/>
</dbReference>
<dbReference type="Pfam" id="PF01909">
    <property type="entry name" value="NTP_transf_2"/>
    <property type="match status" value="1"/>
</dbReference>
<dbReference type="PIRSF" id="PIRSF006288">
    <property type="entry name" value="PII_uridyltransf"/>
    <property type="match status" value="1"/>
</dbReference>
<dbReference type="SMART" id="SM00471">
    <property type="entry name" value="HDc"/>
    <property type="match status" value="1"/>
</dbReference>
<dbReference type="SUPFAM" id="SSF55021">
    <property type="entry name" value="ACT-like"/>
    <property type="match status" value="2"/>
</dbReference>
<dbReference type="SUPFAM" id="SSF109604">
    <property type="entry name" value="HD-domain/PDEase-like"/>
    <property type="match status" value="1"/>
</dbReference>
<dbReference type="SUPFAM" id="SSF81301">
    <property type="entry name" value="Nucleotidyltransferase"/>
    <property type="match status" value="1"/>
</dbReference>
<dbReference type="SUPFAM" id="SSF81593">
    <property type="entry name" value="Nucleotidyltransferase substrate binding subunit/domain"/>
    <property type="match status" value="1"/>
</dbReference>
<dbReference type="PROSITE" id="PS51671">
    <property type="entry name" value="ACT"/>
    <property type="match status" value="2"/>
</dbReference>
<dbReference type="PROSITE" id="PS51831">
    <property type="entry name" value="HD"/>
    <property type="match status" value="1"/>
</dbReference>